<evidence type="ECO:0000255" key="1">
    <source>
        <dbReference type="HAMAP-Rule" id="MF_00380"/>
    </source>
</evidence>
<evidence type="ECO:0000256" key="2">
    <source>
        <dbReference type="SAM" id="MobiDB-lite"/>
    </source>
</evidence>
<proteinExistence type="inferred from homology"/>
<feature type="chain" id="PRO_1000072173" description="Integration host factor subunit alpha">
    <location>
        <begin position="1"/>
        <end position="97"/>
    </location>
</feature>
<feature type="region of interest" description="Disordered" evidence="2">
    <location>
        <begin position="50"/>
        <end position="71"/>
    </location>
</feature>
<dbReference type="EMBL" id="CP000675">
    <property type="protein sequence ID" value="ABQ54415.1"/>
    <property type="molecule type" value="Genomic_DNA"/>
</dbReference>
<dbReference type="SMR" id="A5IAL5"/>
<dbReference type="KEGG" id="lpc:LPC_0426"/>
<dbReference type="HOGENOM" id="CLU_105066_1_3_6"/>
<dbReference type="GO" id="GO:0005829">
    <property type="term" value="C:cytosol"/>
    <property type="evidence" value="ECO:0007669"/>
    <property type="project" value="TreeGrafter"/>
</dbReference>
<dbReference type="GO" id="GO:0003677">
    <property type="term" value="F:DNA binding"/>
    <property type="evidence" value="ECO:0007669"/>
    <property type="project" value="UniProtKB-UniRule"/>
</dbReference>
<dbReference type="GO" id="GO:0030527">
    <property type="term" value="F:structural constituent of chromatin"/>
    <property type="evidence" value="ECO:0007669"/>
    <property type="project" value="InterPro"/>
</dbReference>
<dbReference type="GO" id="GO:0006310">
    <property type="term" value="P:DNA recombination"/>
    <property type="evidence" value="ECO:0007669"/>
    <property type="project" value="UniProtKB-UniRule"/>
</dbReference>
<dbReference type="GO" id="GO:0009893">
    <property type="term" value="P:positive regulation of metabolic process"/>
    <property type="evidence" value="ECO:0007669"/>
    <property type="project" value="UniProtKB-ARBA"/>
</dbReference>
<dbReference type="GO" id="GO:0006355">
    <property type="term" value="P:regulation of DNA-templated transcription"/>
    <property type="evidence" value="ECO:0007669"/>
    <property type="project" value="UniProtKB-UniRule"/>
</dbReference>
<dbReference type="GO" id="GO:0006417">
    <property type="term" value="P:regulation of translation"/>
    <property type="evidence" value="ECO:0007669"/>
    <property type="project" value="UniProtKB-UniRule"/>
</dbReference>
<dbReference type="CDD" id="cd13835">
    <property type="entry name" value="IHF_A"/>
    <property type="match status" value="1"/>
</dbReference>
<dbReference type="FunFam" id="4.10.520.10:FF:000002">
    <property type="entry name" value="Integration host factor subunit alpha"/>
    <property type="match status" value="1"/>
</dbReference>
<dbReference type="Gene3D" id="4.10.520.10">
    <property type="entry name" value="IHF-like DNA-binding proteins"/>
    <property type="match status" value="1"/>
</dbReference>
<dbReference type="HAMAP" id="MF_00380">
    <property type="entry name" value="IHF_alpha"/>
    <property type="match status" value="1"/>
</dbReference>
<dbReference type="InterPro" id="IPR000119">
    <property type="entry name" value="Hist_DNA-bd"/>
</dbReference>
<dbReference type="InterPro" id="IPR020816">
    <property type="entry name" value="Histone-like_DNA-bd_CS"/>
</dbReference>
<dbReference type="InterPro" id="IPR010992">
    <property type="entry name" value="IHF-like_DNA-bd_dom_sf"/>
</dbReference>
<dbReference type="InterPro" id="IPR005684">
    <property type="entry name" value="IHF_alpha"/>
</dbReference>
<dbReference type="NCBIfam" id="TIGR00987">
    <property type="entry name" value="himA"/>
    <property type="match status" value="1"/>
</dbReference>
<dbReference type="NCBIfam" id="NF001401">
    <property type="entry name" value="PRK00285.1"/>
    <property type="match status" value="1"/>
</dbReference>
<dbReference type="PANTHER" id="PTHR33175">
    <property type="entry name" value="DNA-BINDING PROTEIN HU"/>
    <property type="match status" value="1"/>
</dbReference>
<dbReference type="PANTHER" id="PTHR33175:SF2">
    <property type="entry name" value="INTEGRATION HOST FACTOR SUBUNIT ALPHA"/>
    <property type="match status" value="1"/>
</dbReference>
<dbReference type="Pfam" id="PF00216">
    <property type="entry name" value="Bac_DNA_binding"/>
    <property type="match status" value="1"/>
</dbReference>
<dbReference type="PRINTS" id="PR01727">
    <property type="entry name" value="DNABINDINGHU"/>
</dbReference>
<dbReference type="SMART" id="SM00411">
    <property type="entry name" value="BHL"/>
    <property type="match status" value="1"/>
</dbReference>
<dbReference type="SUPFAM" id="SSF47729">
    <property type="entry name" value="IHF-like DNA-binding proteins"/>
    <property type="match status" value="1"/>
</dbReference>
<dbReference type="PROSITE" id="PS00045">
    <property type="entry name" value="HISTONE_LIKE"/>
    <property type="match status" value="1"/>
</dbReference>
<name>IHFA_LEGPC</name>
<reference key="1">
    <citation type="submission" date="2006-11" db="EMBL/GenBank/DDBJ databases">
        <title>Identification and characterization of a new conjugation/ type IVA secretion system (trb/tra) of L. pneumophila Corby localized on a mobile genomic island.</title>
        <authorList>
            <person name="Gloeckner G."/>
            <person name="Albert-Weissenberger C."/>
            <person name="Weinmann E."/>
            <person name="Jacobi S."/>
            <person name="Schunder E."/>
            <person name="Steinert M."/>
            <person name="Buchrieser C."/>
            <person name="Hacker J."/>
            <person name="Heuner K."/>
        </authorList>
    </citation>
    <scope>NUCLEOTIDE SEQUENCE [LARGE SCALE GENOMIC DNA]</scope>
    <source>
        <strain>Corby</strain>
    </source>
</reference>
<protein>
    <recommendedName>
        <fullName evidence="1">Integration host factor subunit alpha</fullName>
        <shortName evidence="1">IHF-alpha</shortName>
    </recommendedName>
</protein>
<comment type="function">
    <text evidence="1">This protein is one of the two subunits of integration host factor, a specific DNA-binding protein that functions in genetic recombination as well as in transcriptional and translational control.</text>
</comment>
<comment type="subunit">
    <text evidence="1">Heterodimer of an alpha and a beta chain.</text>
</comment>
<comment type="similarity">
    <text evidence="1">Belongs to the bacterial histone-like protein family.</text>
</comment>
<sequence length="97" mass="10987">MNALSKAIMAETLCDELKLNKPVAKEMVENFFEELRHALENGQHVKLSGFGNFTLRDKPQRPGRNPKTGEEIPVEARRVVTFKPGLKLKTKIEKIGK</sequence>
<keyword id="KW-0233">DNA recombination</keyword>
<keyword id="KW-0238">DNA-binding</keyword>
<keyword id="KW-0804">Transcription</keyword>
<keyword id="KW-0805">Transcription regulation</keyword>
<keyword id="KW-0810">Translation regulation</keyword>
<gene>
    <name evidence="1" type="primary">ihfA</name>
    <name evidence="1" type="synonym">himA</name>
    <name type="ordered locus">LPC_0426</name>
</gene>
<organism>
    <name type="scientific">Legionella pneumophila (strain Corby)</name>
    <dbReference type="NCBI Taxonomy" id="400673"/>
    <lineage>
        <taxon>Bacteria</taxon>
        <taxon>Pseudomonadati</taxon>
        <taxon>Pseudomonadota</taxon>
        <taxon>Gammaproteobacteria</taxon>
        <taxon>Legionellales</taxon>
        <taxon>Legionellaceae</taxon>
        <taxon>Legionella</taxon>
    </lineage>
</organism>
<accession>A5IAL5</accession>